<evidence type="ECO:0000255" key="1">
    <source>
        <dbReference type="HAMAP-Rule" id="MF_01436"/>
    </source>
</evidence>
<dbReference type="EMBL" id="CP000247">
    <property type="protein sequence ID" value="ABG68651.1"/>
    <property type="molecule type" value="Genomic_DNA"/>
</dbReference>
<dbReference type="RefSeq" id="WP_001041794.1">
    <property type="nucleotide sequence ID" value="NC_008253.1"/>
</dbReference>
<dbReference type="SMR" id="Q0TK80"/>
<dbReference type="KEGG" id="ecp:ECP_0623"/>
<dbReference type="HOGENOM" id="CLU_034180_11_0_6"/>
<dbReference type="Proteomes" id="UP000009182">
    <property type="component" value="Chromosome"/>
</dbReference>
<dbReference type="GO" id="GO:0005886">
    <property type="term" value="C:plasma membrane"/>
    <property type="evidence" value="ECO:0007669"/>
    <property type="project" value="UniProtKB-SubCell"/>
</dbReference>
<dbReference type="GO" id="GO:0042931">
    <property type="term" value="F:enterobactin transmembrane transporter activity"/>
    <property type="evidence" value="ECO:0007669"/>
    <property type="project" value="InterPro"/>
</dbReference>
<dbReference type="CDD" id="cd06173">
    <property type="entry name" value="MFS_MefA_like"/>
    <property type="match status" value="1"/>
</dbReference>
<dbReference type="FunFam" id="1.20.1250.20:FF:000056">
    <property type="entry name" value="Enterobactin exporter EntS"/>
    <property type="match status" value="1"/>
</dbReference>
<dbReference type="Gene3D" id="1.20.1250.20">
    <property type="entry name" value="MFS general substrate transporter like domains"/>
    <property type="match status" value="1"/>
</dbReference>
<dbReference type="HAMAP" id="MF_01436">
    <property type="entry name" value="MFS_EntS"/>
    <property type="match status" value="1"/>
</dbReference>
<dbReference type="InterPro" id="IPR023722">
    <property type="entry name" value="Enterobactin_exp_EntS"/>
</dbReference>
<dbReference type="InterPro" id="IPR020846">
    <property type="entry name" value="MFS_dom"/>
</dbReference>
<dbReference type="InterPro" id="IPR036259">
    <property type="entry name" value="MFS_trans_sf"/>
</dbReference>
<dbReference type="InterPro" id="IPR010290">
    <property type="entry name" value="TM_effector"/>
</dbReference>
<dbReference type="NCBIfam" id="NF007792">
    <property type="entry name" value="PRK10489.1"/>
    <property type="match status" value="1"/>
</dbReference>
<dbReference type="PANTHER" id="PTHR23513:SF9">
    <property type="entry name" value="ENTEROBACTIN EXPORTER ENTS"/>
    <property type="match status" value="1"/>
</dbReference>
<dbReference type="PANTHER" id="PTHR23513">
    <property type="entry name" value="INTEGRAL MEMBRANE EFFLUX PROTEIN-RELATED"/>
    <property type="match status" value="1"/>
</dbReference>
<dbReference type="Pfam" id="PF05977">
    <property type="entry name" value="MFS_3"/>
    <property type="match status" value="1"/>
</dbReference>
<dbReference type="SUPFAM" id="SSF103473">
    <property type="entry name" value="MFS general substrate transporter"/>
    <property type="match status" value="1"/>
</dbReference>
<dbReference type="PROSITE" id="PS50850">
    <property type="entry name" value="MFS"/>
    <property type="match status" value="1"/>
</dbReference>
<feature type="chain" id="PRO_0000301860" description="Enterobactin exporter EntS">
    <location>
        <begin position="1"/>
        <end position="416"/>
    </location>
</feature>
<feature type="topological domain" description="Cytoplasmic" evidence="1">
    <location>
        <begin position="1"/>
        <end position="21"/>
    </location>
</feature>
<feature type="transmembrane region" description="Helical" evidence="1">
    <location>
        <begin position="22"/>
        <end position="42"/>
    </location>
</feature>
<feature type="topological domain" description="Periplasmic" evidence="1">
    <location>
        <begin position="43"/>
        <end position="55"/>
    </location>
</feature>
<feature type="transmembrane region" description="Helical" evidence="1">
    <location>
        <begin position="56"/>
        <end position="76"/>
    </location>
</feature>
<feature type="topological domain" description="Cytoplasmic" evidence="1">
    <location>
        <begin position="77"/>
        <end position="83"/>
    </location>
</feature>
<feature type="transmembrane region" description="Helical" evidence="1">
    <location>
        <begin position="84"/>
        <end position="104"/>
    </location>
</feature>
<feature type="topological domain" description="Periplasmic" evidence="1">
    <location>
        <begin position="105"/>
        <end position="109"/>
    </location>
</feature>
<feature type="transmembrane region" description="Helical" evidence="1">
    <location>
        <begin position="110"/>
        <end position="130"/>
    </location>
</feature>
<feature type="topological domain" description="Cytoplasmic" evidence="1">
    <location>
        <begin position="131"/>
        <end position="156"/>
    </location>
</feature>
<feature type="transmembrane region" description="Helical" evidence="1">
    <location>
        <begin position="157"/>
        <end position="177"/>
    </location>
</feature>
<feature type="topological domain" description="Periplasmic" evidence="1">
    <location>
        <position position="178"/>
    </location>
</feature>
<feature type="transmembrane region" description="Helical" evidence="1">
    <location>
        <begin position="179"/>
        <end position="199"/>
    </location>
</feature>
<feature type="topological domain" description="Cytoplasmic" evidence="1">
    <location>
        <begin position="200"/>
        <end position="218"/>
    </location>
</feature>
<feature type="transmembrane region" description="Helical" evidence="1">
    <location>
        <begin position="219"/>
        <end position="239"/>
    </location>
</feature>
<feature type="topological domain" description="Periplasmic" evidence="1">
    <location>
        <begin position="240"/>
        <end position="256"/>
    </location>
</feature>
<feature type="transmembrane region" description="Helical" evidence="1">
    <location>
        <begin position="257"/>
        <end position="277"/>
    </location>
</feature>
<feature type="topological domain" description="Cytoplasmic" evidence="1">
    <location>
        <begin position="278"/>
        <end position="287"/>
    </location>
</feature>
<feature type="transmembrane region" description="Helical" evidence="1">
    <location>
        <begin position="288"/>
        <end position="307"/>
    </location>
</feature>
<feature type="topological domain" description="Periplasmic" evidence="1">
    <location>
        <begin position="308"/>
        <end position="313"/>
    </location>
</feature>
<feature type="transmembrane region" description="Helical" evidence="1">
    <location>
        <begin position="314"/>
        <end position="336"/>
    </location>
</feature>
<feature type="topological domain" description="Cytoplasmic" evidence="1">
    <location>
        <begin position="337"/>
        <end position="356"/>
    </location>
</feature>
<feature type="transmembrane region" description="Helical" evidence="1">
    <location>
        <begin position="357"/>
        <end position="377"/>
    </location>
</feature>
<feature type="topological domain" description="Periplasmic" evidence="1">
    <location>
        <position position="378"/>
    </location>
</feature>
<feature type="transmembrane region" description="Helical" evidence="1">
    <location>
        <begin position="379"/>
        <end position="399"/>
    </location>
</feature>
<feature type="topological domain" description="Cytoplasmic" evidence="1">
    <location>
        <begin position="400"/>
        <end position="416"/>
    </location>
</feature>
<gene>
    <name evidence="1" type="primary">entS</name>
    <name type="ordered locus">ECP_0623</name>
</gene>
<proteinExistence type="inferred from homology"/>
<name>ENTS_ECOL5</name>
<keyword id="KW-0997">Cell inner membrane</keyword>
<keyword id="KW-1003">Cell membrane</keyword>
<keyword id="KW-0472">Membrane</keyword>
<keyword id="KW-0812">Transmembrane</keyword>
<keyword id="KW-1133">Transmembrane helix</keyword>
<keyword id="KW-0813">Transport</keyword>
<comment type="function">
    <text evidence="1">Component of an export pathway for enterobactin.</text>
</comment>
<comment type="subcellular location">
    <subcellularLocation>
        <location evidence="1">Cell inner membrane</location>
        <topology evidence="1">Multi-pass membrane protein</topology>
    </subcellularLocation>
</comment>
<comment type="similarity">
    <text evidence="1">Belongs to the major facilitator superfamily. EntS (TC 2.A.1.38) family.</text>
</comment>
<organism>
    <name type="scientific">Escherichia coli O6:K15:H31 (strain 536 / UPEC)</name>
    <dbReference type="NCBI Taxonomy" id="362663"/>
    <lineage>
        <taxon>Bacteria</taxon>
        <taxon>Pseudomonadati</taxon>
        <taxon>Pseudomonadota</taxon>
        <taxon>Gammaproteobacteria</taxon>
        <taxon>Enterobacterales</taxon>
        <taxon>Enterobacteriaceae</taxon>
        <taxon>Escherichia</taxon>
    </lineage>
</organism>
<protein>
    <recommendedName>
        <fullName evidence="1">Enterobactin exporter EntS</fullName>
    </recommendedName>
</protein>
<reference key="1">
    <citation type="journal article" date="2006" name="Mol. Microbiol.">
        <title>Role of pathogenicity island-associated integrases in the genome plasticity of uropathogenic Escherichia coli strain 536.</title>
        <authorList>
            <person name="Hochhut B."/>
            <person name="Wilde C."/>
            <person name="Balling G."/>
            <person name="Middendorf B."/>
            <person name="Dobrindt U."/>
            <person name="Brzuszkiewicz E."/>
            <person name="Gottschalk G."/>
            <person name="Carniel E."/>
            <person name="Hacker J."/>
        </authorList>
    </citation>
    <scope>NUCLEOTIDE SEQUENCE [LARGE SCALE GENOMIC DNA]</scope>
    <source>
        <strain>536 / UPEC</strain>
    </source>
</reference>
<sequence>MNKQSWLLNLSLLKTHPAFRAVFLARFISIVSLGLLGVAVPVQIQMMTHSTWQVGLSVTLTGGAMFVGLMVGGVLADRYERKKVILLARGTCGIGFIGLCLNALLPEPSLLAIYLLGLWDGFFASLGVTALLAATPALVGRENLMQAGAITMLTVRLGSVISPMIGGLLLATGGVAWNYGLAAAGTFITLLPLLSLPALPPPPQPREHPLKSLLAGFRFLLASPLVGGIALLGGLLTMASAVRVLYPALADNWQMSAAQIGFLYAAIPLGAAIGALTSGKLAHSVRPGLLMLLSTLGAFLAIGLFGLMPMWILGVVCLALFGWLSAVSSLLQYTMLQTQTPEAMLGRINGLWTAQNVTGDAIGAALLGGLGAMMTPVASASASGFGLLIIGVLLLLVLVELRRFRQTPPQVTASGS</sequence>
<accession>Q0TK80</accession>